<organismHost>
    <name type="scientific">Epomops franqueti</name>
    <name type="common">Franquet's epauletted fruit bat</name>
    <name type="synonym">Epomophorus franqueti</name>
    <dbReference type="NCBI Taxonomy" id="77231"/>
</organismHost>
<organismHost>
    <name type="scientific">Homo sapiens</name>
    <name type="common">Human</name>
    <dbReference type="NCBI Taxonomy" id="9606"/>
</organismHost>
<organismHost>
    <name type="scientific">Myonycteris torquata</name>
    <name type="common">Little collared fruit bat</name>
    <dbReference type="NCBI Taxonomy" id="77243"/>
</organismHost>
<organism>
    <name type="scientific">Sudan ebolavirus (strain Boniface-76)</name>
    <name type="common">SEBOV</name>
    <name type="synonym">Sudan Ebola virus</name>
    <dbReference type="NCBI Taxonomy" id="128948"/>
    <lineage>
        <taxon>Viruses</taxon>
        <taxon>Riboviria</taxon>
        <taxon>Orthornavirae</taxon>
        <taxon>Negarnaviricota</taxon>
        <taxon>Haploviricotina</taxon>
        <taxon>Monjiviricetes</taxon>
        <taxon>Mononegavirales</taxon>
        <taxon>Filoviridae</taxon>
        <taxon>Orthoebolavirus</taxon>
        <taxon>Orthoebolavirus sudanense</taxon>
        <taxon>Sudan ebolavirus</taxon>
    </lineage>
</organism>
<comment type="function">
    <molecule>Envelope glycoprotein</molecule>
    <text evidence="3">Trimeric GP1,2 complexes form the virion surface spikes and mediate the viral entry processes, with GP1 acting as the receptor-binding subunit and GP2 as the membrane fusion subunit. At later times of infection, down-regulates the expression of various host cell surface molecules that are essential for immune surveillance and cell adhesion. Down-modulates several integrins including ITGA1, ITGA2, ITGA3, ITGA4, ITGA5, ITGA6, ITGAV and ITGB1. This decrease in cell adhesion molecules may lead to cell detachment, contributing to the disruption of blood vessel integrity and hemorrhages developed during infection (cytotoxicity). Interacts with host TLR4 and thereby stimulates the differentiation and activation of monocytes leading to bystander death of T-lymphocytes. Down-regulates as well the function of host natural killer cells. Counteracts the antiviral effect of host BST2/tetherin that restricts release of progeny virions from infected cells. However, cooperates with VP40 and host BST2 to activate canonical NF-kappa-B pathway in a manner dependent on neddylation.</text>
</comment>
<comment type="function">
    <molecule>Shed GP</molecule>
    <text evidence="3">Functions as a decoy for anti-GP1,2 antibodies thereby contributing to viral immune evasion. Interacts and activates host macrophages and dendritic cells inducing up-regulation of cytokine transcription. This effect is mediated throught activation of host TLR4.</text>
</comment>
<comment type="function">
    <molecule>GP1</molecule>
    <text evidence="2 3 6">Responsible for binding to the receptor(s) on target cells. Interacts with CD209/DC-SIGN and CLEC4M/DC-SIGNR which act as cofactors for virus entry into dendritic cells (DCs) and endothelial cells. Binding to the macrophage specific lectin CLEC10A also seem to enhance virus infectivity (PubMed:14990712). Interaction with FOLR1/folate receptor alpha may be a cofactor for virus entry in some cell types, although results are contradictory (By similarity). Members of the Tyro3 receptor tyrosine kinase family also seem to be cell entry factors in filovirus infection (By similarity). Once attached, the virions are internalized through clathrin-dependent endocytosis and/or macropinocytosis. After internalization of the virus into the endosomes of the host cell, proteolysis of GP1 by two cysteine proteases, CTSB/cathepsin B and CTSL/cathepsin L removes the glycan cap and allows GP1 binding to the host entry receptor NPC1. NPC1-binding, Ca(2+) and acidic pH induce a conformational change of GP2, which unmasks its fusion peptide and permit membranes fusion (By similarity).</text>
</comment>
<comment type="function">
    <molecule>GP2</molecule>
    <text evidence="3">Acts as a class I viral fusion protein. Under the current model, the protein has at least 3 conformational states: pre-fusion native state, pre-hairpin intermediate state, and post-fusion hairpin state. During viral and target cell membrane fusion, the coiled coil regions (heptad repeats) assume a trimer-of-hairpins structure, positioning the fusion peptide in close proximity to the C-terminal region of the ectodomain. The formation of this structure appears to drive apposition and subsequent fusion of viral and target cell membranes. Responsible for penetration of the virus into the cell cytoplasm by mediating the fusion of the membrane of the endocytosed virus particle with the endosomal membrane. Low pH in endosomes induces an irreversible conformational change in GP2, releasing the fusion hydrophobic peptide.</text>
</comment>
<comment type="subunit">
    <molecule>Envelope glycoprotein</molecule>
    <text evidence="3">Homotrimer; each monomer consists of a GP1 and a GP2 subunit linked by disulfide bonds. The resulting peplomers (GP1,2) protrude from the virus surface as spikes. Interacts with host integrin alpha-V/ITGAV. Interacts with host CLEC10A. Binds also to host CD209 and CLEC4M/DC-SIGN(R). Interacts with host FOLR1. Interacts with BST2; this interaction inhibits the antiviral effect of BST2 and this allows viral release from infected cells. Interacts with host FCN1; this interaction enhances viral entry. Interacts with host TLR4; this interaction induces cell death in T-lymphocytes or proinflammatory cytokines and SOCS1 production in monocytes.</text>
</comment>
<comment type="subunit">
    <molecule>GP1</molecule>
    <text evidence="3">Interacts with host entry receptor NPC1.</text>
</comment>
<comment type="subunit">
    <molecule>Shed GP</molecule>
    <text evidence="3">GP1 and GP2delta are part of GP1,2delta soluble complexes released by ectodomain shedding.</text>
</comment>
<comment type="subcellular location">
    <molecule>GP2</molecule>
    <subcellularLocation>
        <location evidence="3">Virion membrane</location>
        <topology evidence="4">Single-pass type I membrane protein</topology>
    </subcellularLocation>
    <subcellularLocation>
        <location evidence="3">Host cell membrane</location>
        <topology evidence="4">Single-pass type I membrane protein</topology>
    </subcellularLocation>
    <text evidence="3">In the cell, localizes to the plasma membrane lipid rafts, which probably represent the assembly and budding site.</text>
</comment>
<comment type="subcellular location">
    <molecule>GP1</molecule>
    <subcellularLocation>
        <location evidence="3">Virion membrane</location>
        <topology evidence="3">Peripheral membrane protein</topology>
    </subcellularLocation>
    <subcellularLocation>
        <location evidence="3">Host cell membrane</location>
        <topology evidence="3">Peripheral membrane protein</topology>
    </subcellularLocation>
    <text evidence="3">GP1 is not anchored to the viral envelope, but forms a disulfid-linked complex with the extravirion surface GP2. In the cell, both GP1 and GP2 localize to the plasma membrane lipid rafts, which probably represent the assembly and budding site. GP1 can also be shed after proteolytic processing.</text>
</comment>
<comment type="subcellular location">
    <molecule>Shed GP</molecule>
    <subcellularLocation>
        <location evidence="3">Secreted</location>
    </subcellularLocation>
    <text evidence="3">GP2-delta bound to GP1 (GP1,2-delta) is produced by proteolytic cleavage of GP1,2 by host ADAM17 and shed by the virus.</text>
</comment>
<comment type="domain">
    <text evidence="1">The mucin-like region seems to be involved in the cytotoxic function. This region is also involved in binding to human CLEC10A (By similarity).</text>
</comment>
<comment type="domain">
    <text evidence="1">The coiled coil regions play a role in oligomerization and fusion activity.</text>
</comment>
<comment type="PTM">
    <molecule>Envelope glycoprotein</molecule>
    <text evidence="7">The signal peptide region modulates GP's high mannose glycosylation, thereby determining the efficiency of the interactions with DC-SIGN(R).</text>
</comment>
<comment type="PTM">
    <molecule>Envelope glycoprotein</molecule>
    <text evidence="10">N-glycosylated.</text>
</comment>
<comment type="PTM">
    <text evidence="1">O-glycosylated in the mucin-like region.</text>
</comment>
<comment type="PTM">
    <text evidence="1">Palmitoylation of GP2 is not required for its function.</text>
</comment>
<comment type="PTM">
    <text evidence="1">Specific enzymatic cleavages in vivo yield mature proteins. The precursor is processed into GP1 and GP2 by host cell furin in the trans Golgi, and maybe by other host proteases, to yield the mature GP1 and GP2 proteins. The cleavage site corresponds to the furin optimal cleavage sequence [KR]-X-[KR]-R. This cleavage does not seem to be required for function. After the internalization of the virus into cell endosomes, GP1 C-terminus is removed by the endosomal proteases cathepsin B, cathepsin L, or both, leaving a 19-kDa N-terminal fragment which is further digested by cathepsin B. Proteolytic processing of GP1,2 by host ADAM17 can remove the transmembrane anchor of GP2 and leads to shedding of complexes consisting in GP1 and truncated GP2 (GP1,2delta) (By similarity).</text>
</comment>
<comment type="RNA editing">
    <location>
        <position position="295" evidence="8"/>
    </location>
    <text>Partially edited. RNA editing at this position consists of an insertion of one adenine nucleotide. The sequence displayed here is the full-length transmembrane glycoprotein, derived from the edited RNA. The unedited RNA gives rise to the small secreted glycoprotein (AC P60172).</text>
</comment>
<comment type="miscellaneous">
    <text evidence="1">Filoviruses entry requires functional lipid rafts at the host cell surface.</text>
</comment>
<comment type="miscellaneous">
    <text>Essential for infectivity, as it is the sole viral protein expressed at the virion surface.</text>
</comment>
<comment type="similarity">
    <text evidence="9">Belongs to the filoviruses glycoprotein family.</text>
</comment>
<dbReference type="EMBL" id="U28134">
    <property type="protein sequence ID" value="AAB37096.1"/>
    <property type="molecule type" value="Genomic_RNA"/>
</dbReference>
<dbReference type="PDB" id="3VE0">
    <property type="method" value="X-ray"/>
    <property type="resolution" value="3.35 A"/>
    <property type="chains" value="I=33-313, J=473-637"/>
</dbReference>
<dbReference type="PDBsum" id="3VE0"/>
<dbReference type="SMR" id="Q66814"/>
<dbReference type="GlyCosmos" id="Q66814">
    <property type="glycosylation" value="12 sites, No reported glycans"/>
</dbReference>
<dbReference type="ABCD" id="Q66814">
    <property type="antibodies" value="2 sequenced antibodies"/>
</dbReference>
<dbReference type="EvolutionaryTrace" id="Q66814"/>
<dbReference type="GO" id="GO:0005576">
    <property type="term" value="C:extracellular region"/>
    <property type="evidence" value="ECO:0007669"/>
    <property type="project" value="UniProtKB-SubCell"/>
</dbReference>
<dbReference type="GO" id="GO:0020002">
    <property type="term" value="C:host cell plasma membrane"/>
    <property type="evidence" value="ECO:0007669"/>
    <property type="project" value="UniProtKB-SubCell"/>
</dbReference>
<dbReference type="GO" id="GO:0016020">
    <property type="term" value="C:membrane"/>
    <property type="evidence" value="ECO:0007669"/>
    <property type="project" value="UniProtKB-KW"/>
</dbReference>
<dbReference type="GO" id="GO:0019031">
    <property type="term" value="C:viral envelope"/>
    <property type="evidence" value="ECO:0007669"/>
    <property type="project" value="UniProtKB-KW"/>
</dbReference>
<dbReference type="GO" id="GO:0055036">
    <property type="term" value="C:virion membrane"/>
    <property type="evidence" value="ECO:0007669"/>
    <property type="project" value="UniProtKB-SubCell"/>
</dbReference>
<dbReference type="GO" id="GO:0075512">
    <property type="term" value="P:clathrin-dependent endocytosis of virus by host cell"/>
    <property type="evidence" value="ECO:0007669"/>
    <property type="project" value="UniProtKB-KW"/>
</dbReference>
<dbReference type="GO" id="GO:0098670">
    <property type="term" value="P:entry receptor-mediated virion attachment to host cell"/>
    <property type="evidence" value="ECO:0007669"/>
    <property type="project" value="UniProtKB-KW"/>
</dbReference>
<dbReference type="GO" id="GO:0039654">
    <property type="term" value="P:fusion of virus membrane with host endosome membrane"/>
    <property type="evidence" value="ECO:0007669"/>
    <property type="project" value="UniProtKB-KW"/>
</dbReference>
<dbReference type="GO" id="GO:0052170">
    <property type="term" value="P:symbiont-mediated suppression of host innate immune response"/>
    <property type="evidence" value="ECO:0007669"/>
    <property type="project" value="UniProtKB-KW"/>
</dbReference>
<dbReference type="GO" id="GO:0039587">
    <property type="term" value="P:symbiont-mediated-mediated suppression of host tetherin activity"/>
    <property type="evidence" value="ECO:0007669"/>
    <property type="project" value="UniProtKB-KW"/>
</dbReference>
<dbReference type="CDD" id="cd09850">
    <property type="entry name" value="Ebola-like_HR1-HR2"/>
    <property type="match status" value="1"/>
</dbReference>
<dbReference type="Gene3D" id="1.10.287.210">
    <property type="match status" value="1"/>
</dbReference>
<dbReference type="InterPro" id="IPR054584">
    <property type="entry name" value="Ebola-like_HR1-HR2"/>
</dbReference>
<dbReference type="InterPro" id="IPR014625">
    <property type="entry name" value="GPC_FiloV"/>
</dbReference>
<dbReference type="InterPro" id="IPR002561">
    <property type="entry name" value="GPC_filovir-type_extra_dom"/>
</dbReference>
<dbReference type="Pfam" id="PF22307">
    <property type="entry name" value="Ebola-like_HR1-HR2"/>
    <property type="match status" value="1"/>
</dbReference>
<dbReference type="Pfam" id="PF01611">
    <property type="entry name" value="Filo_glycop"/>
    <property type="match status" value="1"/>
</dbReference>
<dbReference type="PIRSF" id="PIRSF036874">
    <property type="entry name" value="GPC_FiloV"/>
    <property type="match status" value="1"/>
</dbReference>
<dbReference type="SUPFAM" id="SSF58069">
    <property type="entry name" value="Virus ectodomain"/>
    <property type="match status" value="1"/>
</dbReference>
<name>VGP_EBOSB</name>
<evidence type="ECO:0000250" key="1"/>
<evidence type="ECO:0000250" key="2">
    <source>
        <dbReference type="UniProtKB" id="O11457"/>
    </source>
</evidence>
<evidence type="ECO:0000250" key="3">
    <source>
        <dbReference type="UniProtKB" id="Q05320"/>
    </source>
</evidence>
<evidence type="ECO:0000255" key="4"/>
<evidence type="ECO:0000256" key="5">
    <source>
        <dbReference type="SAM" id="MobiDB-lite"/>
    </source>
</evidence>
<evidence type="ECO:0000269" key="6">
    <source>
    </source>
</evidence>
<evidence type="ECO:0000269" key="7">
    <source>
    </source>
</evidence>
<evidence type="ECO:0000269" key="8">
    <source>
    </source>
</evidence>
<evidence type="ECO:0000305" key="9"/>
<evidence type="ECO:0000305" key="10">
    <source>
    </source>
</evidence>
<evidence type="ECO:0007829" key="11">
    <source>
        <dbReference type="PDB" id="3VE0"/>
    </source>
</evidence>
<proteinExistence type="evidence at protein level"/>
<feature type="signal peptide" evidence="4">
    <location>
        <begin position="1"/>
        <end position="32"/>
    </location>
</feature>
<feature type="chain" id="PRO_0000037476" description="Envelope glycoprotein">
    <location>
        <begin position="33"/>
        <end position="676"/>
    </location>
</feature>
<feature type="chain" id="PRO_0000037477" description="GP1" evidence="1">
    <location>
        <begin position="33"/>
        <end position="501"/>
    </location>
</feature>
<feature type="chain" id="PRO_0000037478" description="GP2" evidence="1">
    <location>
        <begin position="502"/>
        <end position="676"/>
    </location>
</feature>
<feature type="chain" id="PRO_0000245063" description="Shed GP" evidence="1">
    <location>
        <begin position="502"/>
        <end position="637"/>
    </location>
</feature>
<feature type="topological domain" description="Extracellular" evidence="4">
    <location>
        <begin position="33"/>
        <end position="650"/>
    </location>
</feature>
<feature type="transmembrane region" description="Helical" evidence="4">
    <location>
        <begin position="651"/>
        <end position="671"/>
    </location>
</feature>
<feature type="topological domain" description="Cytoplasmic" evidence="4">
    <location>
        <begin position="672"/>
        <end position="676"/>
    </location>
</feature>
<feature type="region of interest" description="Receptor-binding" evidence="1">
    <location>
        <begin position="54"/>
        <end position="201"/>
    </location>
</feature>
<feature type="region of interest" description="Mucin-like region" evidence="1">
    <location>
        <begin position="305"/>
        <end position="485"/>
    </location>
</feature>
<feature type="region of interest" description="Disordered" evidence="5">
    <location>
        <begin position="313"/>
        <end position="351"/>
    </location>
</feature>
<feature type="region of interest" description="Disordered" evidence="5">
    <location>
        <begin position="406"/>
        <end position="458"/>
    </location>
</feature>
<feature type="region of interest" description="Fusion peptide" evidence="1">
    <location>
        <begin position="524"/>
        <end position="539"/>
    </location>
</feature>
<feature type="coiled-coil region" evidence="4">
    <location>
        <begin position="554"/>
        <end position="595"/>
    </location>
</feature>
<feature type="coiled-coil region" evidence="4">
    <location>
        <begin position="615"/>
        <end position="634"/>
    </location>
</feature>
<feature type="compositionally biased region" description="Basic and acidic residues" evidence="5">
    <location>
        <begin position="330"/>
        <end position="344"/>
    </location>
</feature>
<feature type="compositionally biased region" description="Polar residues" evidence="5">
    <location>
        <begin position="415"/>
        <end position="430"/>
    </location>
</feature>
<feature type="compositionally biased region" description="Polar residues" evidence="5">
    <location>
        <begin position="438"/>
        <end position="458"/>
    </location>
</feature>
<feature type="site" description="Involved in receptor recognition and/or post-binding events" evidence="4">
    <location>
        <position position="57"/>
    </location>
</feature>
<feature type="site" description="Involved in receptor recognition and/or post-binding events" evidence="4">
    <location>
        <position position="63"/>
    </location>
</feature>
<feature type="site" description="Involved in receptor recognition and/or post-binding events" evidence="4">
    <location>
        <position position="88"/>
    </location>
</feature>
<feature type="site" description="Involved in receptor recognition and/or post-binding events" evidence="4">
    <location>
        <position position="170"/>
    </location>
</feature>
<feature type="site" description="Cleavage; by host furin" evidence="1">
    <location>
        <begin position="501"/>
        <end position="502"/>
    </location>
</feature>
<feature type="site" description="Cleavage; by host ADAM17" evidence="1">
    <location>
        <begin position="637"/>
        <end position="638"/>
    </location>
</feature>
<feature type="lipid moiety-binding region" description="S-palmitoyl cysteine; by host" evidence="3">
    <location>
        <position position="670"/>
    </location>
</feature>
<feature type="lipid moiety-binding region" description="S-palmitoyl cysteine; by host" evidence="3">
    <location>
        <position position="672"/>
    </location>
</feature>
<feature type="glycosylation site" description="N-linked (GlcNAc...) asparagine; by host" evidence="4">
    <location>
        <position position="40"/>
    </location>
</feature>
<feature type="glycosylation site" description="N-linked (GlcNAc...) asparagine; by host" evidence="4">
    <location>
        <position position="204"/>
    </location>
</feature>
<feature type="glycosylation site" description="N-linked (GlcNAc...) asparagine; by host" evidence="4">
    <location>
        <position position="208"/>
    </location>
</feature>
<feature type="glycosylation site" description="N-linked (GlcNAc...) asparagine; by host" evidence="4">
    <location>
        <position position="238"/>
    </location>
</feature>
<feature type="glycosylation site" description="N-linked (GlcNAc...) asparagine; by host" evidence="4">
    <location>
        <position position="257"/>
    </location>
</feature>
<feature type="glycosylation site" description="N-linked (GlcNAc...) asparagine; by host" evidence="4">
    <location>
        <position position="268"/>
    </location>
</feature>
<feature type="glycosylation site" description="N-linked (GlcNAc...) asparagine; by host" evidence="4">
    <location>
        <position position="296"/>
    </location>
</feature>
<feature type="glycosylation site" description="N-linked (GlcNAc...) asparagine; by host" evidence="4">
    <location>
        <position position="314"/>
    </location>
</feature>
<feature type="glycosylation site" description="N-linked (GlcNAc...) asparagine; by host" evidence="4">
    <location>
        <position position="366"/>
    </location>
</feature>
<feature type="glycosylation site" description="N-linked (GlcNAc...) asparagine; by host" evidence="4">
    <location>
        <position position="463"/>
    </location>
</feature>
<feature type="glycosylation site" description="N-linked (GlcNAc...) asparagine; by host" evidence="4">
    <location>
        <position position="563"/>
    </location>
</feature>
<feature type="glycosylation site" description="N-linked (GlcNAc...) asparagine; by host" evidence="4">
    <location>
        <position position="618"/>
    </location>
</feature>
<feature type="disulfide bond" description="Interchain (between GP1 and GP2 chains)" evidence="1">
    <location>
        <begin position="53"/>
        <end position="609"/>
    </location>
</feature>
<feature type="disulfide bond" evidence="4">
    <location>
        <begin position="108"/>
        <end position="135"/>
    </location>
</feature>
<feature type="disulfide bond" evidence="4">
    <location>
        <begin position="121"/>
        <end position="147"/>
    </location>
</feature>
<feature type="disulfide bond" evidence="4">
    <location>
        <begin position="511"/>
        <end position="556"/>
    </location>
</feature>
<feature type="disulfide bond" evidence="2">
    <location>
        <begin position="601"/>
        <end position="608"/>
    </location>
</feature>
<feature type="strand" evidence="11">
    <location>
        <begin position="34"/>
        <end position="39"/>
    </location>
</feature>
<feature type="strand" evidence="11">
    <location>
        <begin position="45"/>
        <end position="49"/>
    </location>
</feature>
<feature type="helix" evidence="11">
    <location>
        <begin position="60"/>
        <end position="62"/>
    </location>
</feature>
<feature type="strand" evidence="11">
    <location>
        <begin position="63"/>
        <end position="70"/>
    </location>
</feature>
<feature type="helix" evidence="11">
    <location>
        <begin position="71"/>
        <end position="73"/>
    </location>
</feature>
<feature type="helix" evidence="11">
    <location>
        <begin position="79"/>
        <end position="83"/>
    </location>
</feature>
<feature type="strand" evidence="11">
    <location>
        <begin position="86"/>
        <end position="91"/>
    </location>
</feature>
<feature type="strand" evidence="11">
    <location>
        <begin position="96"/>
        <end position="98"/>
    </location>
</feature>
<feature type="strand" evidence="11">
    <location>
        <begin position="100"/>
        <end position="103"/>
    </location>
</feature>
<feature type="strand" evidence="11">
    <location>
        <begin position="105"/>
        <end position="114"/>
    </location>
</feature>
<feature type="strand" evidence="11">
    <location>
        <begin position="120"/>
        <end position="122"/>
    </location>
</feature>
<feature type="strand" evidence="11">
    <location>
        <begin position="135"/>
        <end position="143"/>
    </location>
</feature>
<feature type="strand" evidence="11">
    <location>
        <begin position="149"/>
        <end position="154"/>
    </location>
</feature>
<feature type="strand" evidence="11">
    <location>
        <begin position="159"/>
        <end position="161"/>
    </location>
</feature>
<feature type="strand" evidence="11">
    <location>
        <begin position="163"/>
        <end position="169"/>
    </location>
</feature>
<feature type="strand" evidence="11">
    <location>
        <begin position="176"/>
        <end position="189"/>
    </location>
</feature>
<feature type="strand" evidence="11">
    <location>
        <begin position="216"/>
        <end position="221"/>
    </location>
</feature>
<feature type="strand" evidence="11">
    <location>
        <begin position="223"/>
        <end position="226"/>
    </location>
</feature>
<feature type="strand" evidence="11">
    <location>
        <begin position="236"/>
        <end position="239"/>
    </location>
</feature>
<feature type="helix" evidence="11">
    <location>
        <begin position="250"/>
        <end position="254"/>
    </location>
</feature>
<feature type="turn" evidence="11">
    <location>
        <begin position="259"/>
        <end position="262"/>
    </location>
</feature>
<feature type="strand" evidence="11">
    <location>
        <begin position="515"/>
        <end position="520"/>
    </location>
</feature>
<feature type="strand" evidence="11">
    <location>
        <begin position="524"/>
        <end position="526"/>
    </location>
</feature>
<feature type="strand" evidence="11">
    <location>
        <begin position="528"/>
        <end position="532"/>
    </location>
</feature>
<feature type="turn" evidence="11">
    <location>
        <begin position="533"/>
        <end position="535"/>
    </location>
</feature>
<feature type="turn" evidence="11">
    <location>
        <begin position="539"/>
        <end position="542"/>
    </location>
</feature>
<feature type="strand" evidence="11">
    <location>
        <begin position="543"/>
        <end position="548"/>
    </location>
</feature>
<feature type="helix" evidence="11">
    <location>
        <begin position="552"/>
        <end position="575"/>
    </location>
</feature>
<feature type="strand" evidence="11">
    <location>
        <begin position="579"/>
        <end position="581"/>
    </location>
</feature>
<feature type="helix" evidence="11">
    <location>
        <begin position="584"/>
        <end position="594"/>
    </location>
</feature>
<feature type="strand" evidence="11">
    <location>
        <begin position="606"/>
        <end position="608"/>
    </location>
</feature>
<gene>
    <name type="primary">GP</name>
</gene>
<keyword id="KW-0002">3D-structure</keyword>
<keyword id="KW-1165">Clathrin-mediated endocytosis of virus by host</keyword>
<keyword id="KW-0165">Cleavage on pair of basic residues</keyword>
<keyword id="KW-0175">Coiled coil</keyword>
<keyword id="KW-1015">Disulfide bond</keyword>
<keyword id="KW-1170">Fusion of virus membrane with host endosomal membrane</keyword>
<keyword id="KW-1168">Fusion of virus membrane with host membrane</keyword>
<keyword id="KW-0325">Glycoprotein</keyword>
<keyword id="KW-1032">Host cell membrane</keyword>
<keyword id="KW-1043">Host membrane</keyword>
<keyword id="KW-0945">Host-virus interaction</keyword>
<keyword id="KW-1090">Inhibition of host innate immune response by virus</keyword>
<keyword id="KW-1084">Inhibition of host tetherin by virus</keyword>
<keyword id="KW-0449">Lipoprotein</keyword>
<keyword id="KW-0472">Membrane</keyword>
<keyword id="KW-0564">Palmitate</keyword>
<keyword id="KW-0691">RNA editing</keyword>
<keyword id="KW-0964">Secreted</keyword>
<keyword id="KW-0732">Signal</keyword>
<keyword id="KW-0812">Transmembrane</keyword>
<keyword id="KW-1133">Transmembrane helix</keyword>
<keyword id="KW-1161">Viral attachment to host cell</keyword>
<keyword id="KW-1234">Viral attachment to host entry receptor</keyword>
<keyword id="KW-0261">Viral envelope protein</keyword>
<keyword id="KW-0899">Viral immunoevasion</keyword>
<keyword id="KW-1162">Viral penetration into host cytoplasm</keyword>
<keyword id="KW-0946">Virion</keyword>
<keyword id="KW-1164">Virus endocytosis by host</keyword>
<keyword id="KW-1160">Virus entry into host cell</keyword>
<sequence length="676" mass="74987">MEGLSLLQLPRDKFRKSSFFVWVIILFQKAFSMPLGVVTNSTLEVTEIDQLVCKDHLASTDQLKSVGLNLEGSGVSTDIPSATKRWGFRSGVPPQVVSYEAGEWAENCYNLEIKKPDGSECLPPPPDGVRGFPRCRYVHKAQGTGPCPGDYAFHKDGAFFLYDRLASTVIYRGVNFAEGVIAFLILAKPKETFLQSPPIREAANYTENTSSYYATSYLEYEIENFGAQHSTTLFKINNNTFVLLDRPHTPQFLFQLNDTIQLHQQLSNTTGKLIWTLDANINADIGEWAFWENKKNLSEQLRGEELSFETLSLNETEDDDATSSRTTKGRISDRATRKYSDLVPKDSPGMVSLHVPEGETTLPSQNSTEGRRVDVNTQETITETTATIIGTNGNNMQISTIGTGLSSSQILSSSPTMAPSPETQTSTTYTPKLPVMTTEESTTPPRNSPGSTTEAPTLTTPENITTAVKTVWPQESTSNGLITSTVTGILGSLGLRKRSRRQVNTRATGKCNPNLHYWTAQEQHNAAGIAWIPYFGPGAEGIYTEGLMHNQNALVCGLRQLANETTQALQLFLRATTELRTYTILNRKAIDFLLRRWGGTCRILGPDCCIEPHDWTKNITDKINQIIHDFIDNPLPNQDNDDNWWTGWRQWIPAGIGITGIIIAIIALLCVCKLLC</sequence>
<protein>
    <recommendedName>
        <fullName>Envelope glycoprotein</fullName>
    </recommendedName>
    <alternativeName>
        <fullName>GP1,2</fullName>
        <shortName>GP</shortName>
    </alternativeName>
    <component>
        <recommendedName>
            <fullName>GP1</fullName>
        </recommendedName>
    </component>
    <component>
        <recommendedName>
            <fullName>GP2</fullName>
        </recommendedName>
    </component>
    <component>
        <recommendedName>
            <fullName>Shed GP</fullName>
        </recommendedName>
        <alternativeName>
            <fullName>GP1,2-delta</fullName>
        </alternativeName>
    </component>
</protein>
<accession>Q66814</accession>
<reference key="1">
    <citation type="journal article" date="1996" name="Proc. Natl. Acad. Sci. U.S.A.">
        <title>The virion glycoproteins of Ebola viruses are encoded in two reading frames and are expressed through transcriptional editing.</title>
        <authorList>
            <person name="Sanchez A."/>
            <person name="Trappier S.G."/>
            <person name="Mahy B.W.J."/>
            <person name="Peters C.J."/>
            <person name="Nichol S.T."/>
        </authorList>
    </citation>
    <scope>NUCLEOTIDE SEQUENCE [GENOMIC RNA]</scope>
    <scope>RNA EDITING</scope>
</reference>
<reference key="2">
    <citation type="journal article" date="2004" name="J. Virol.">
        <title>Human macrophage C-type lectin specific for galactose and N-acetylgalactosamine promotes filovirus entry.</title>
        <authorList>
            <person name="Takada A."/>
            <person name="Fujioka K."/>
            <person name="Tsuiji M."/>
            <person name="Morikawa A."/>
            <person name="Higashi N."/>
            <person name="Ebihara H."/>
            <person name="Kobasa D."/>
            <person name="Feldmann H."/>
            <person name="Irimura T."/>
            <person name="Kawaoka Y."/>
        </authorList>
    </citation>
    <scope>INTERACTION WITH HUMAN CLEC10A</scope>
</reference>
<reference key="3">
    <citation type="journal article" date="2006" name="J. Virol.">
        <title>The signal peptide of the ebolavirus glycoprotein influences interaction with the cellular lectins DC-SIGN and DC-SIGNR.</title>
        <authorList>
            <person name="Marzi A."/>
            <person name="Akhavan A."/>
            <person name="Simmons G."/>
            <person name="Gramberg T."/>
            <person name="Hofmann H."/>
            <person name="Bates P."/>
            <person name="Lingappa V.R."/>
            <person name="Poehlmann S."/>
        </authorList>
    </citation>
    <scope>SIGNAL PEPTIDE (ENVELOPE GLYCOPROTEIN)</scope>
    <scope>GLYCOSYLATION (ENVELOPE GLYCOPROTEIN)</scope>
</reference>